<dbReference type="EMBL" id="AY884001">
    <property type="protein sequence ID" value="AAX76524.1"/>
    <property type="molecule type" value="Genomic_RNA"/>
</dbReference>
<dbReference type="SMR" id="Q14EA7"/>
<dbReference type="Proteomes" id="UP000006551">
    <property type="component" value="Genome"/>
</dbReference>
<dbReference type="GO" id="GO:0044178">
    <property type="term" value="C:host cell Golgi membrane"/>
    <property type="evidence" value="ECO:0007669"/>
    <property type="project" value="UniProtKB-SubCell"/>
</dbReference>
<dbReference type="GO" id="GO:0016020">
    <property type="term" value="C:membrane"/>
    <property type="evidence" value="ECO:0007669"/>
    <property type="project" value="UniProtKB-UniRule"/>
</dbReference>
<dbReference type="GO" id="GO:0019031">
    <property type="term" value="C:viral envelope"/>
    <property type="evidence" value="ECO:0007669"/>
    <property type="project" value="UniProtKB-UniRule"/>
</dbReference>
<dbReference type="GO" id="GO:0055036">
    <property type="term" value="C:virion membrane"/>
    <property type="evidence" value="ECO:0007669"/>
    <property type="project" value="UniProtKB-SubCell"/>
</dbReference>
<dbReference type="GO" id="GO:0039660">
    <property type="term" value="F:structural constituent of virion"/>
    <property type="evidence" value="ECO:0007669"/>
    <property type="project" value="UniProtKB-UniRule"/>
</dbReference>
<dbReference type="CDD" id="cd21568">
    <property type="entry name" value="HCoV-like_M"/>
    <property type="match status" value="1"/>
</dbReference>
<dbReference type="HAMAP" id="MF_04202">
    <property type="entry name" value="BETA_CORONA_M"/>
    <property type="match status" value="1"/>
</dbReference>
<dbReference type="InterPro" id="IPR002574">
    <property type="entry name" value="M_CoV"/>
</dbReference>
<dbReference type="InterPro" id="IPR044362">
    <property type="entry name" value="M_HCoV-like"/>
</dbReference>
<dbReference type="Pfam" id="PF01635">
    <property type="entry name" value="CoV_M"/>
    <property type="match status" value="1"/>
</dbReference>
<dbReference type="PROSITE" id="PS51927">
    <property type="entry name" value="COV_M"/>
    <property type="match status" value="1"/>
</dbReference>
<organismHost>
    <name type="scientific">Homo sapiens</name>
    <name type="common">Human</name>
    <dbReference type="NCBI Taxonomy" id="9606"/>
</organismHost>
<comment type="function">
    <text evidence="1 2">Component of the viral envelope that plays a central role in virus morphogenesis and assembly via its interactions with other viral proteins.</text>
</comment>
<comment type="subunit">
    <text evidence="1 2">Homomultimer. Interacts with envelope E protein in the budding compartment of the host cell, which is located between endoplasmic reticulum and the Golgi complex. Forms a complex with HE and S proteins. Interacts with nucleocapsid N protein. This interaction probably participates in RNA packaging into the virus.</text>
</comment>
<comment type="subcellular location">
    <subcellularLocation>
        <location evidence="1">Virion membrane</location>
        <topology evidence="1">Multi-pass membrane protein</topology>
    </subcellularLocation>
    <subcellularLocation>
        <location evidence="1">Host Golgi apparatus membrane</location>
        <topology evidence="1">Multi-pass membrane protein</topology>
    </subcellularLocation>
    <text evidence="1">Largely embedded in the lipid bilayer.</text>
</comment>
<comment type="miscellaneous">
    <text>Isolate N2 belongs to genotype B.</text>
</comment>
<comment type="similarity">
    <text evidence="1">Belongs to the betacoronaviruses M protein family.</text>
</comment>
<name>VME1_CVHN2</name>
<feature type="chain" id="PRO_0000297816" description="Membrane protein">
    <location>
        <begin position="1"/>
        <end position="223"/>
    </location>
</feature>
<feature type="topological domain" description="Virion surface" evidence="1">
    <location>
        <begin position="1"/>
        <end position="20"/>
    </location>
</feature>
<feature type="transmembrane region" description="Helical" evidence="1">
    <location>
        <begin position="21"/>
        <end position="41"/>
    </location>
</feature>
<feature type="topological domain" description="Intravirion" evidence="1">
    <location>
        <begin position="42"/>
        <end position="51"/>
    </location>
</feature>
<feature type="transmembrane region" description="Helical" evidence="1">
    <location>
        <begin position="52"/>
        <end position="72"/>
    </location>
</feature>
<feature type="topological domain" description="Virion surface" evidence="1">
    <location>
        <begin position="73"/>
        <end position="80"/>
    </location>
</feature>
<feature type="transmembrane region" description="Helical" evidence="1">
    <location>
        <begin position="81"/>
        <end position="101"/>
    </location>
</feature>
<feature type="topological domain" description="Intravirion" evidence="1">
    <location>
        <begin position="102"/>
        <end position="223"/>
    </location>
</feature>
<gene>
    <name evidence="1" type="primary">M</name>
    <name type="ORF">6</name>
</gene>
<evidence type="ECO:0000255" key="1">
    <source>
        <dbReference type="HAMAP-Rule" id="MF_04202"/>
    </source>
</evidence>
<evidence type="ECO:0000255" key="2">
    <source>
        <dbReference type="PROSITE-ProRule" id="PRU01275"/>
    </source>
</evidence>
<sequence>MNESIFPHWNSDQAITFLKEWNFSLGVILLLITIILQFGYTSRSMFVYLIKMIILWLMWPLTIILTIFNCFYALNNIFLGLSILFTIISIVIWILYFVNSIRLFIRTGSWWSFNPETNNLMCIDMKGKMYVRPVIEDYHTLTATVIRGHLYIQGVKLGTGYTLADLPVYVTVAKVQVLCTYKRAFLDKLDVNSGFAVFVKSKVGNYRLPSSKSSGMDTALLRA</sequence>
<proteinExistence type="inferred from homology"/>
<accession>Q14EA7</accession>
<keyword id="KW-0325">Glycoprotein</keyword>
<keyword id="KW-1040">Host Golgi apparatus</keyword>
<keyword id="KW-1043">Host membrane</keyword>
<keyword id="KW-0945">Host-virus interaction</keyword>
<keyword id="KW-0472">Membrane</keyword>
<keyword id="KW-0812">Transmembrane</keyword>
<keyword id="KW-1133">Transmembrane helix</keyword>
<keyword id="KW-0261">Viral envelope protein</keyword>
<keyword id="KW-0899">Viral immunoevasion</keyword>
<keyword id="KW-0468">Viral matrix protein</keyword>
<keyword id="KW-0946">Virion</keyword>
<organism>
    <name type="scientific">Human coronavirus HKU1 (isolate N2)</name>
    <name type="common">HCoV-HKU1</name>
    <dbReference type="NCBI Taxonomy" id="443240"/>
    <lineage>
        <taxon>Viruses</taxon>
        <taxon>Riboviria</taxon>
        <taxon>Orthornavirae</taxon>
        <taxon>Pisuviricota</taxon>
        <taxon>Pisoniviricetes</taxon>
        <taxon>Nidovirales</taxon>
        <taxon>Cornidovirineae</taxon>
        <taxon>Coronaviridae</taxon>
        <taxon>Orthocoronavirinae</taxon>
        <taxon>Betacoronavirus</taxon>
        <taxon>Embecovirus</taxon>
        <taxon>Human coronavirus HKU1</taxon>
    </lineage>
</organism>
<reference key="1">
    <citation type="journal article" date="2006" name="J. Virol.">
        <title>Comparative analysis of 22 coronavirus HKU1 genomes reveals a novel genotype and evidence of natural recombination in coronavirus HKU1.</title>
        <authorList>
            <person name="Woo P.C.Y."/>
            <person name="Lau S.K.P."/>
            <person name="Yip C.C.Y."/>
            <person name="Huang Y."/>
            <person name="Tsoi H.-W."/>
            <person name="Chan K.-H."/>
            <person name="Yuen K.-Y."/>
        </authorList>
    </citation>
    <scope>NUCLEOTIDE SEQUENCE [GENOMIC RNA]</scope>
</reference>
<protein>
    <recommendedName>
        <fullName evidence="1">Membrane protein</fullName>
        <shortName evidence="1">M protein</shortName>
    </recommendedName>
    <alternativeName>
        <fullName evidence="1">E1 glycoprotein</fullName>
    </alternativeName>
    <alternativeName>
        <fullName evidence="1">Matrix glycoprotein</fullName>
    </alternativeName>
    <alternativeName>
        <fullName evidence="1">Membrane glycoprotein</fullName>
    </alternativeName>
</protein>